<protein>
    <recommendedName>
        <fullName>Tyrosinase</fullName>
        <ecNumber>1.14.18.1</ecNumber>
    </recommendedName>
    <alternativeName>
        <fullName>Monophenol monooxygenase</fullName>
    </alternativeName>
</protein>
<feature type="signal peptide" evidence="4">
    <location>
        <begin position="1"/>
        <end position="17"/>
    </location>
</feature>
<feature type="chain" id="PRO_0000035876" description="Tyrosinase">
    <location>
        <begin position="18"/>
        <end position="530"/>
    </location>
</feature>
<feature type="topological domain" description="Lumenal, melanosome" evidence="4">
    <location>
        <begin position="19"/>
        <end position="473"/>
    </location>
</feature>
<feature type="transmembrane region" description="Helical" evidence="4">
    <location>
        <begin position="474"/>
        <end position="494"/>
    </location>
</feature>
<feature type="topological domain" description="Cytoplasmic" evidence="4">
    <location>
        <begin position="495"/>
        <end position="530"/>
    </location>
</feature>
<feature type="binding site" evidence="3">
    <location>
        <position position="180"/>
    </location>
    <ligand>
        <name>Cu cation</name>
        <dbReference type="ChEBI" id="CHEBI:23378"/>
        <label>A</label>
    </ligand>
</feature>
<feature type="binding site" evidence="3">
    <location>
        <position position="202"/>
    </location>
    <ligand>
        <name>Cu cation</name>
        <dbReference type="ChEBI" id="CHEBI:23378"/>
        <label>A</label>
    </ligand>
</feature>
<feature type="binding site" evidence="3">
    <location>
        <position position="211"/>
    </location>
    <ligand>
        <name>Cu cation</name>
        <dbReference type="ChEBI" id="CHEBI:23378"/>
        <label>A</label>
    </ligand>
</feature>
<feature type="binding site" evidence="3">
    <location>
        <position position="363"/>
    </location>
    <ligand>
        <name>Cu cation</name>
        <dbReference type="ChEBI" id="CHEBI:23378"/>
        <label>B</label>
    </ligand>
</feature>
<feature type="binding site" evidence="3">
    <location>
        <position position="367"/>
    </location>
    <ligand>
        <name>Cu cation</name>
        <dbReference type="ChEBI" id="CHEBI:23378"/>
        <label>B</label>
    </ligand>
</feature>
<feature type="binding site" evidence="3">
    <location>
        <position position="390"/>
    </location>
    <ligand>
        <name>Cu cation</name>
        <dbReference type="ChEBI" id="CHEBI:23378"/>
        <label>B</label>
    </ligand>
</feature>
<feature type="glycosylation site" description="N-linked (GlcNAc...) asparagine" evidence="4">
    <location>
        <position position="86"/>
    </location>
</feature>
<feature type="glycosylation site" description="N-linked (GlcNAc...) asparagine" evidence="4">
    <location>
        <position position="230"/>
    </location>
</feature>
<feature type="glycosylation site" description="N-linked (GlcNAc...) asparagine" evidence="4">
    <location>
        <position position="290"/>
    </location>
</feature>
<feature type="glycosylation site" description="N-linked (GlcNAc...) asparagine" evidence="4">
    <location>
        <position position="337"/>
    </location>
</feature>
<feature type="glycosylation site" description="N-linked (GlcNAc...) asparagine" evidence="4">
    <location>
        <position position="371"/>
    </location>
</feature>
<feature type="sequence conflict" description="In Ref. 2; AAL38168." evidence="6" ref="2">
    <original>V</original>
    <variation>A</variation>
    <location>
        <position position="172"/>
    </location>
</feature>
<accession>Q8MIU0</accession>
<accession>Q8WN56</accession>
<gene>
    <name type="primary">TYR</name>
</gene>
<proteinExistence type="evidence at transcript level"/>
<reference key="1">
    <citation type="journal article" date="2004" name="Mamm. Genome">
        <title>A form of albinism in cattle is caused by a tyrosinase frameshift mutation.</title>
        <authorList>
            <person name="Schmutz S.M."/>
            <person name="Berryere T.G."/>
            <person name="Ciobanu D.C."/>
            <person name="Mileham A.J."/>
            <person name="Schmidtz B.H."/>
            <person name="Fredholm M."/>
        </authorList>
    </citation>
    <scope>NUCLEOTIDE SEQUENCE [MRNA]</scope>
    <scope>INVOLVEMENT IN ALBINISM</scope>
    <source>
        <strain>White Galloway</strain>
    </source>
</reference>
<reference key="2">
    <citation type="submission" date="2001-11" db="EMBL/GenBank/DDBJ databases">
        <title>Transcriptional regulation of bovine TYR gene.</title>
        <authorList>
            <person name="Guibert S."/>
            <person name="Julien R."/>
            <person name="Oulmouden A."/>
        </authorList>
    </citation>
    <scope>NUCLEOTIDE SEQUENCE [MRNA]</scope>
    <source>
        <tissue>Skin</tissue>
    </source>
</reference>
<dbReference type="EC" id="1.14.18.1"/>
<dbReference type="EMBL" id="AY046527">
    <property type="protein sequence ID" value="AAL02331.2"/>
    <property type="molecule type" value="mRNA"/>
</dbReference>
<dbReference type="EMBL" id="AF445639">
    <property type="protein sequence ID" value="AAL38168.1"/>
    <property type="molecule type" value="mRNA"/>
</dbReference>
<dbReference type="RefSeq" id="NP_851344.1">
    <property type="nucleotide sequence ID" value="NM_181001.3"/>
</dbReference>
<dbReference type="FunCoup" id="Q8MIU0">
    <property type="interactions" value="8"/>
</dbReference>
<dbReference type="STRING" id="9913.ENSBTAP00000015679"/>
<dbReference type="GlyCosmos" id="Q8MIU0">
    <property type="glycosylation" value="5 sites, No reported glycans"/>
</dbReference>
<dbReference type="GlyGen" id="Q8MIU0">
    <property type="glycosylation" value="5 sites"/>
</dbReference>
<dbReference type="PaxDb" id="9913-ENSBTAP00000015679"/>
<dbReference type="GeneID" id="280951"/>
<dbReference type="KEGG" id="bta:280951"/>
<dbReference type="CTD" id="7299"/>
<dbReference type="eggNOG" id="ENOG502QRET">
    <property type="taxonomic scope" value="Eukaryota"/>
</dbReference>
<dbReference type="InParanoid" id="Q8MIU0"/>
<dbReference type="OrthoDB" id="6132182at2759"/>
<dbReference type="SABIO-RK" id="Q8MIU0"/>
<dbReference type="Proteomes" id="UP000009136">
    <property type="component" value="Unplaced"/>
</dbReference>
<dbReference type="GO" id="GO:0042470">
    <property type="term" value="C:melanosome"/>
    <property type="evidence" value="ECO:0000250"/>
    <property type="project" value="UniProtKB"/>
</dbReference>
<dbReference type="GO" id="GO:0033162">
    <property type="term" value="C:melanosome membrane"/>
    <property type="evidence" value="ECO:0007669"/>
    <property type="project" value="UniProtKB-SubCell"/>
</dbReference>
<dbReference type="GO" id="GO:0046872">
    <property type="term" value="F:metal ion binding"/>
    <property type="evidence" value="ECO:0007669"/>
    <property type="project" value="UniProtKB-KW"/>
</dbReference>
<dbReference type="GO" id="GO:0042803">
    <property type="term" value="F:protein homodimerization activity"/>
    <property type="evidence" value="ECO:0000250"/>
    <property type="project" value="UniProtKB"/>
</dbReference>
<dbReference type="GO" id="GO:0004503">
    <property type="term" value="F:tyrosinase activity"/>
    <property type="evidence" value="ECO:0000318"/>
    <property type="project" value="GO_Central"/>
</dbReference>
<dbReference type="GO" id="GO:0042438">
    <property type="term" value="P:melanin biosynthetic process"/>
    <property type="evidence" value="ECO:0000318"/>
    <property type="project" value="GO_Central"/>
</dbReference>
<dbReference type="GO" id="GO:0043473">
    <property type="term" value="P:pigmentation"/>
    <property type="evidence" value="ECO:0000318"/>
    <property type="project" value="GO_Central"/>
</dbReference>
<dbReference type="GO" id="GO:0009637">
    <property type="term" value="P:response to blue light"/>
    <property type="evidence" value="ECO:0000250"/>
    <property type="project" value="UniProtKB"/>
</dbReference>
<dbReference type="FunFam" id="1.10.1280.10:FF:000003">
    <property type="entry name" value="Tyrosinase"/>
    <property type="match status" value="1"/>
</dbReference>
<dbReference type="Gene3D" id="1.10.1280.10">
    <property type="entry name" value="Di-copper center containing domain from catechol oxidase"/>
    <property type="match status" value="1"/>
</dbReference>
<dbReference type="InterPro" id="IPR008922">
    <property type="entry name" value="Di-copper_centre_dom_sf"/>
</dbReference>
<dbReference type="InterPro" id="IPR050316">
    <property type="entry name" value="Tyrosinase/Hemocyanin"/>
</dbReference>
<dbReference type="InterPro" id="IPR002227">
    <property type="entry name" value="Tyrosinase_Cu-bd"/>
</dbReference>
<dbReference type="PANTHER" id="PTHR11474:SF124">
    <property type="entry name" value="TYROSINASE"/>
    <property type="match status" value="1"/>
</dbReference>
<dbReference type="PANTHER" id="PTHR11474">
    <property type="entry name" value="TYROSINASE FAMILY MEMBER"/>
    <property type="match status" value="1"/>
</dbReference>
<dbReference type="Pfam" id="PF00264">
    <property type="entry name" value="Tyrosinase"/>
    <property type="match status" value="1"/>
</dbReference>
<dbReference type="PRINTS" id="PR00092">
    <property type="entry name" value="TYROSINASE"/>
</dbReference>
<dbReference type="SUPFAM" id="SSF48056">
    <property type="entry name" value="Di-copper centre-containing domain"/>
    <property type="match status" value="1"/>
</dbReference>
<dbReference type="PROSITE" id="PS00497">
    <property type="entry name" value="TYROSINASE_1"/>
    <property type="match status" value="1"/>
</dbReference>
<dbReference type="PROSITE" id="PS00498">
    <property type="entry name" value="TYROSINASE_2"/>
    <property type="match status" value="1"/>
</dbReference>
<sequence length="530" mass="60304">MLLAALYCLLWSFRTSAGHFPRACASSKSLTEKECCPPWAGDGSPCGRLSGRGSCQDVILSTAPLGPQFPFTGVDDRESWPSIFYNRTCQCFSNFMGFNCGSCKFGFRGPRCTERRLLVRRNIFDLSVPEKNKFLAYLTLAKHTTSPDYVIPTGTYGQMNHGTTPLFNDVSVYDLFVWMHYYVSRDTLLGDSEVWRDIDFAHEAPGFLPWHRLFLLLWEQEIQKLTGDENFTIPYWDWRDAENCDVCTDEYMGGRNPANPNLLSPASFFSSWQIVCSRLEEYNSRQALCNGTSEGPLLRNPGNHDKARTPRLPSSADVEFCLSLTQYESGSMDKAANFSFRNTLEGFADPVTGIADASQSSMHNALHIYMNGTMSQVPGSANDPIFLLHHAFVDSIFEQWLRKYHPLQDVYPEANAPIGHNRESYMVPFIPLYRNGDFFISSKDXGYDYSYLQDSEPDIFQDYIKPYLEQAQRIWPWLIGAAVVGSVLTAVLGGLTSLLCRRKRNQLPEEKQPLLMEKEDYHNLMYQSHL</sequence>
<comment type="function">
    <text evidence="1">This is a copper-containing oxidase that functions in the formation of pigments such as melanins and other polyphenolic compounds (By similarity). Catalyzes the initial and rate limiting step in the cascade of reactions leading to melanin production from tyrosine (By similarity). In addition to hydroxylating tyrosine to DOPA (3,4-dihydroxyphenylalanine), also catalyzes the oxidation of DOPA to DOPA-quinone, and possibly the oxidation of DHI (5,6-dihydroxyindole) to indole-5,6 quinone (By similarity).</text>
</comment>
<comment type="catalytic activity">
    <reaction evidence="1">
        <text>2 L-dopa + O2 = 2 L-dopaquinone + 2 H2O</text>
        <dbReference type="Rhea" id="RHEA:34287"/>
        <dbReference type="ChEBI" id="CHEBI:15377"/>
        <dbReference type="ChEBI" id="CHEBI:15379"/>
        <dbReference type="ChEBI" id="CHEBI:57504"/>
        <dbReference type="ChEBI" id="CHEBI:57924"/>
        <dbReference type="EC" id="1.14.18.1"/>
    </reaction>
</comment>
<comment type="catalytic activity">
    <reaction evidence="1">
        <text>L-tyrosine + O2 = L-dopaquinone + H2O</text>
        <dbReference type="Rhea" id="RHEA:18117"/>
        <dbReference type="ChEBI" id="CHEBI:15377"/>
        <dbReference type="ChEBI" id="CHEBI:15379"/>
        <dbReference type="ChEBI" id="CHEBI:57924"/>
        <dbReference type="ChEBI" id="CHEBI:58315"/>
        <dbReference type="EC" id="1.14.18.1"/>
    </reaction>
</comment>
<comment type="catalytic activity">
    <reaction evidence="2">
        <text>2 5,6-dihydroxyindole-2-carboxylate + O2 = 2 indole-5,6-quinone-2-carboxylate + 2 H2O</text>
        <dbReference type="Rhea" id="RHEA:68388"/>
        <dbReference type="ChEBI" id="CHEBI:15377"/>
        <dbReference type="ChEBI" id="CHEBI:15379"/>
        <dbReference type="ChEBI" id="CHEBI:16875"/>
        <dbReference type="ChEBI" id="CHEBI:177869"/>
    </reaction>
    <physiologicalReaction direction="left-to-right" evidence="2">
        <dbReference type="Rhea" id="RHEA:68389"/>
    </physiologicalReaction>
</comment>
<comment type="cofactor">
    <cofactor evidence="3">
        <name>Cu(2+)</name>
        <dbReference type="ChEBI" id="CHEBI:29036"/>
    </cofactor>
    <text evidence="3">Binds 2 copper ions per subunit.</text>
</comment>
<comment type="subunit">
    <text evidence="2">Forms an OPN3-dependent complex with DCT in response to blue light in melanocytes.</text>
</comment>
<comment type="subcellular location">
    <subcellularLocation>
        <location evidence="2">Melanosome membrane</location>
        <topology evidence="2">Single-pass type I membrane protein</topology>
    </subcellularLocation>
    <subcellularLocation>
        <location evidence="1">Melanosome</location>
    </subcellularLocation>
    <text evidence="1">Proper trafficking to melanosome is regulated by SGSM2, ANKRD27, RAB9A, RAB32 and RAB38.</text>
</comment>
<comment type="PTM">
    <text evidence="1">Glycosylated.</text>
</comment>
<comment type="disease">
    <text evidence="5">Defects in TYR are the cause of a form of albinism in Braunvieh calf.</text>
</comment>
<comment type="similarity">
    <text evidence="6">Belongs to the tyrosinase family.</text>
</comment>
<comment type="online information" name="Protein Spotlight">
    <link uri="https://www.proteinspotlight.org/back_issues/049"/>
    <text>Snowy stardom - Issue 49 of August 2004</text>
</comment>
<name>TYRO_BOVIN</name>
<organism>
    <name type="scientific">Bos taurus</name>
    <name type="common">Bovine</name>
    <dbReference type="NCBI Taxonomy" id="9913"/>
    <lineage>
        <taxon>Eukaryota</taxon>
        <taxon>Metazoa</taxon>
        <taxon>Chordata</taxon>
        <taxon>Craniata</taxon>
        <taxon>Vertebrata</taxon>
        <taxon>Euteleostomi</taxon>
        <taxon>Mammalia</taxon>
        <taxon>Eutheria</taxon>
        <taxon>Laurasiatheria</taxon>
        <taxon>Artiodactyla</taxon>
        <taxon>Ruminantia</taxon>
        <taxon>Pecora</taxon>
        <taxon>Bovidae</taxon>
        <taxon>Bovinae</taxon>
        <taxon>Bos</taxon>
    </lineage>
</organism>
<keyword id="KW-0015">Albinism</keyword>
<keyword id="KW-0186">Copper</keyword>
<keyword id="KW-0325">Glycoprotein</keyword>
<keyword id="KW-0470">Melanin biosynthesis</keyword>
<keyword id="KW-0472">Membrane</keyword>
<keyword id="KW-0479">Metal-binding</keyword>
<keyword id="KW-0503">Monooxygenase</keyword>
<keyword id="KW-0560">Oxidoreductase</keyword>
<keyword id="KW-1185">Reference proteome</keyword>
<keyword id="KW-0732">Signal</keyword>
<keyword id="KW-0812">Transmembrane</keyword>
<keyword id="KW-1133">Transmembrane helix</keyword>
<evidence type="ECO:0000250" key="1">
    <source>
        <dbReference type="UniProtKB" id="P11344"/>
    </source>
</evidence>
<evidence type="ECO:0000250" key="2">
    <source>
        <dbReference type="UniProtKB" id="P14679"/>
    </source>
</evidence>
<evidence type="ECO:0000250" key="3">
    <source>
        <dbReference type="UniProtKB" id="Q9ZP19"/>
    </source>
</evidence>
<evidence type="ECO:0000255" key="4"/>
<evidence type="ECO:0000269" key="5">
    <source>
    </source>
</evidence>
<evidence type="ECO:0000305" key="6"/>